<evidence type="ECO:0000255" key="1">
    <source>
        <dbReference type="PROSITE-ProRule" id="PRU00574"/>
    </source>
</evidence>
<evidence type="ECO:0000269" key="2">
    <source>
    </source>
</evidence>
<evidence type="ECO:0000269" key="3">
    <source>
    </source>
</evidence>
<evidence type="ECO:0000269" key="4">
    <source>
    </source>
</evidence>
<evidence type="ECO:0007744" key="5">
    <source>
    </source>
</evidence>
<evidence type="ECO:0007744" key="6">
    <source>
    </source>
</evidence>
<evidence type="ECO:0007829" key="7">
    <source>
        <dbReference type="PDB" id="2L4F"/>
    </source>
</evidence>
<evidence type="ECO:0007829" key="8">
    <source>
        <dbReference type="PDB" id="3BQ3"/>
    </source>
</evidence>
<evidence type="ECO:0007829" key="9">
    <source>
        <dbReference type="PDB" id="3O2P"/>
    </source>
</evidence>
<name>DCN1_YEAST</name>
<protein>
    <recommendedName>
        <fullName>Defective in cullin neddylation protein 1</fullName>
    </recommendedName>
</protein>
<sequence>MSNNKIKRKDASPEQEAIESFTSLTKCDPKVSRKYLQRNHWNINYALNDYYDKEIGTFTDEVSTVAHPPVYPKELTQVFEHYINNNLFDIDSLVKFIEELGYNLEDLATLCLAHLLGYKKLEEPLKREDFLSTWFMQGCSTISDMQECIKTLDVKLHEDLQYFTQIYNYAFNLILDPNRKDIDTDEGIQYWKLFFQPEYPVRMEPDLLEAWFRFLRDEGKTTISKDTWRMLLLFFKRYPTIQKIISDYDETAAWPFIIDEFYECLQDQQ</sequence>
<feature type="chain" id="PRO_0000129518" description="Defective in cullin neddylation protein 1">
    <location>
        <begin position="1"/>
        <end position="269"/>
    </location>
</feature>
<feature type="domain" description="UBA-like">
    <location>
        <begin position="14"/>
        <end position="51"/>
    </location>
</feature>
<feature type="domain" description="DCUN1" evidence="1">
    <location>
        <begin position="70"/>
        <end position="266"/>
    </location>
</feature>
<feature type="modified residue" description="Phosphoserine" evidence="5 6">
    <location>
        <position position="12"/>
    </location>
</feature>
<feature type="helix" evidence="8">
    <location>
        <begin position="13"/>
        <end position="25"/>
    </location>
</feature>
<feature type="helix" evidence="8">
    <location>
        <begin position="29"/>
        <end position="37"/>
    </location>
</feature>
<feature type="turn" evidence="8">
    <location>
        <begin position="38"/>
        <end position="41"/>
    </location>
</feature>
<feature type="helix" evidence="8">
    <location>
        <begin position="43"/>
        <end position="54"/>
    </location>
</feature>
<feature type="helix" evidence="7">
    <location>
        <begin position="59"/>
        <end position="61"/>
    </location>
</feature>
<feature type="helix" evidence="8">
    <location>
        <begin position="73"/>
        <end position="82"/>
    </location>
</feature>
<feature type="helix" evidence="8">
    <location>
        <begin position="90"/>
        <end position="100"/>
    </location>
</feature>
<feature type="helix" evidence="8">
    <location>
        <begin position="107"/>
        <end position="115"/>
    </location>
</feature>
<feature type="helix" evidence="8">
    <location>
        <begin position="127"/>
        <end position="136"/>
    </location>
</feature>
<feature type="helix" evidence="8">
    <location>
        <begin position="142"/>
        <end position="158"/>
    </location>
</feature>
<feature type="helix" evidence="8">
    <location>
        <begin position="160"/>
        <end position="174"/>
    </location>
</feature>
<feature type="strand" evidence="8">
    <location>
        <begin position="180"/>
        <end position="183"/>
    </location>
</feature>
<feature type="helix" evidence="8">
    <location>
        <begin position="184"/>
        <end position="194"/>
    </location>
</feature>
<feature type="strand" evidence="9">
    <location>
        <begin position="199"/>
        <end position="201"/>
    </location>
</feature>
<feature type="helix" evidence="8">
    <location>
        <begin position="205"/>
        <end position="218"/>
    </location>
</feature>
<feature type="strand" evidence="8">
    <location>
        <begin position="222"/>
        <end position="224"/>
    </location>
</feature>
<feature type="helix" evidence="8">
    <location>
        <begin position="225"/>
        <end position="237"/>
    </location>
</feature>
<feature type="helix" evidence="8">
    <location>
        <begin position="241"/>
        <end position="247"/>
    </location>
</feature>
<feature type="strand" evidence="9">
    <location>
        <begin position="252"/>
        <end position="254"/>
    </location>
</feature>
<feature type="helix" evidence="8">
    <location>
        <begin position="256"/>
        <end position="267"/>
    </location>
</feature>
<gene>
    <name type="primary">DCN1</name>
    <name type="ordered locus">YLR128W</name>
    <name type="ORF">L3111</name>
</gene>
<reference key="1">
    <citation type="journal article" date="1997" name="Yeast">
        <title>Sequence analysis of a 37.6 kbp cosmid clone from the right arm of Saccharomyces cerevisiae chromosome XII, carrying YAP3, HOG1, SNR6, tRNA-Arg3 and 23 new open reading frames, among which several homologies to proteins involved in cell division control and to mammalian growth factors and other animal proteins are found.</title>
        <authorList>
            <person name="Verhasselt P."/>
            <person name="Volckaert G."/>
        </authorList>
    </citation>
    <scope>NUCLEOTIDE SEQUENCE [LARGE SCALE GENOMIC DNA]</scope>
    <source>
        <strain>ATCC 90840 / EAY235 / FY23</strain>
    </source>
</reference>
<reference key="2">
    <citation type="journal article" date="2014" name="G3 (Bethesda)">
        <title>The reference genome sequence of Saccharomyces cerevisiae: Then and now.</title>
        <authorList>
            <person name="Engel S.R."/>
            <person name="Dietrich F.S."/>
            <person name="Fisk D.G."/>
            <person name="Binkley G."/>
            <person name="Balakrishnan R."/>
            <person name="Costanzo M.C."/>
            <person name="Dwight S.S."/>
            <person name="Hitz B.C."/>
            <person name="Karra K."/>
            <person name="Nash R.S."/>
            <person name="Weng S."/>
            <person name="Wong E.D."/>
            <person name="Lloyd P."/>
            <person name="Skrzypek M.S."/>
            <person name="Miyasato S.R."/>
            <person name="Simison M."/>
            <person name="Cherry J.M."/>
        </authorList>
    </citation>
    <scope>GENOME REANNOTATION</scope>
    <source>
        <strain>ATCC 204508 / S288c</strain>
    </source>
</reference>
<reference key="3">
    <citation type="journal article" date="1997" name="Nature">
        <title>The nucleotide sequence of Saccharomyces cerevisiae chromosome XII.</title>
        <authorList>
            <person name="Johnston M."/>
            <person name="Hillier L.W."/>
            <person name="Riles L."/>
            <person name="Albermann K."/>
            <person name="Andre B."/>
            <person name="Ansorge W."/>
            <person name="Benes V."/>
            <person name="Brueckner M."/>
            <person name="Delius H."/>
            <person name="Dubois E."/>
            <person name="Duesterhoeft A."/>
            <person name="Entian K.-D."/>
            <person name="Floeth M."/>
            <person name="Goffeau A."/>
            <person name="Hebling U."/>
            <person name="Heumann K."/>
            <person name="Heuss-Neitzel D."/>
            <person name="Hilbert H."/>
            <person name="Hilger F."/>
            <person name="Kleine K."/>
            <person name="Koetter P."/>
            <person name="Louis E.J."/>
            <person name="Messenguy F."/>
            <person name="Mewes H.-W."/>
            <person name="Miosga T."/>
            <person name="Moestl D."/>
            <person name="Mueller-Auer S."/>
            <person name="Nentwich U."/>
            <person name="Obermaier B."/>
            <person name="Piravandi E."/>
            <person name="Pohl T.M."/>
            <person name="Portetelle D."/>
            <person name="Purnelle B."/>
            <person name="Rechmann S."/>
            <person name="Rieger M."/>
            <person name="Rinke M."/>
            <person name="Rose M."/>
            <person name="Scharfe M."/>
            <person name="Scherens B."/>
            <person name="Scholler P."/>
            <person name="Schwager C."/>
            <person name="Schwarz S."/>
            <person name="Underwood A.P."/>
            <person name="Urrestarazu L.A."/>
            <person name="Vandenbol M."/>
            <person name="Verhasselt P."/>
            <person name="Vierendeels F."/>
            <person name="Voet M."/>
            <person name="Volckaert G."/>
            <person name="Voss H."/>
            <person name="Wambutt R."/>
            <person name="Wedler E."/>
            <person name="Wedler H."/>
            <person name="Zimmermann F.K."/>
            <person name="Zollner A."/>
            <person name="Hani J."/>
            <person name="Hoheisel J.D."/>
        </authorList>
    </citation>
    <scope>NUCLEOTIDE SEQUENCE [LARGE SCALE GENOMIC DNA]</scope>
    <source>
        <strain>ATCC 204508 / S288c</strain>
    </source>
</reference>
<reference key="4">
    <citation type="journal article" date="2001" name="Nat. Cell Biol.">
        <title>Skp1 forms multiple protein complexes, including RAVE, a regulator of V-ATPase assembly.</title>
        <authorList>
            <person name="Seol J.H."/>
            <person name="Shevchenko A."/>
            <person name="Shevchenko A."/>
            <person name="Deshaies R.J."/>
        </authorList>
    </citation>
    <scope>INTERACTION WITH CDC53</scope>
</reference>
<reference key="5">
    <citation type="journal article" date="2005" name="Nature">
        <title>The conserved protein DCN-1/Dcn1p is required for cullin neddylation in C. elegans and S. cerevisiae.</title>
        <authorList>
            <person name="Kurz T."/>
            <person name="Oezlue N."/>
            <person name="Rudolf F."/>
            <person name="O'Rourke S.M."/>
            <person name="Luke B."/>
            <person name="Hofmann K."/>
            <person name="Hyman A.A."/>
            <person name="Bowerman B."/>
            <person name="Peter M."/>
        </authorList>
    </citation>
    <scope>FUNCTION</scope>
    <scope>INTERACTION WITH UBIQUITIN AND NEDD8</scope>
</reference>
<reference key="6">
    <citation type="journal article" date="2008" name="Mol. Cell. Proteomics">
        <title>A multidimensional chromatography technology for in-depth phosphoproteome analysis.</title>
        <authorList>
            <person name="Albuquerque C.P."/>
            <person name="Smolka M.B."/>
            <person name="Payne S.H."/>
            <person name="Bafna V."/>
            <person name="Eng J."/>
            <person name="Zhou H."/>
        </authorList>
    </citation>
    <scope>PHOSPHORYLATION [LARGE SCALE ANALYSIS] AT SER-12</scope>
    <scope>IDENTIFICATION BY MASS SPECTROMETRY [LARGE SCALE ANALYSIS]</scope>
</reference>
<reference key="7">
    <citation type="journal article" date="2009" name="Science">
        <title>Global analysis of Cdk1 substrate phosphorylation sites provides insights into evolution.</title>
        <authorList>
            <person name="Holt L.J."/>
            <person name="Tuch B.B."/>
            <person name="Villen J."/>
            <person name="Johnson A.D."/>
            <person name="Gygi S.P."/>
            <person name="Morgan D.O."/>
        </authorList>
    </citation>
    <scope>PHOSPHORYLATION [LARGE SCALE ANALYSIS] AT SER-12</scope>
    <scope>IDENTIFICATION BY MASS SPECTROMETRY [LARGE SCALE ANALYSIS]</scope>
</reference>
<reference key="8">
    <citation type="journal article" date="2011" name="Science">
        <title>N-terminal acetylation acts as an avidity enhancer within an interconnected multiprotein complex.</title>
        <authorList>
            <person name="Scott D.C."/>
            <person name="Monda J.K."/>
            <person name="Bennett E.J."/>
            <person name="Harper J.W."/>
            <person name="Schulman B.A."/>
        </authorList>
    </citation>
    <scope>X-RAY CRYSTALLOGRAPHY (2.3 ANGSTROMS) OF 70-269 IN COMPLEX WITH UBC12</scope>
</reference>
<dbReference type="EMBL" id="X89514">
    <property type="protein sequence ID" value="CAA61706.1"/>
    <property type="molecule type" value="Genomic_DNA"/>
</dbReference>
<dbReference type="EMBL" id="Z73300">
    <property type="protein sequence ID" value="CAA97697.1"/>
    <property type="molecule type" value="Genomic_DNA"/>
</dbReference>
<dbReference type="EMBL" id="U53877">
    <property type="protein sequence ID" value="AAB82374.1"/>
    <property type="molecule type" value="Genomic_DNA"/>
</dbReference>
<dbReference type="EMBL" id="X91258">
    <property type="protein sequence ID" value="CAA62639.1"/>
    <property type="molecule type" value="Genomic_DNA"/>
</dbReference>
<dbReference type="EMBL" id="BK006945">
    <property type="protein sequence ID" value="DAA09439.1"/>
    <property type="molecule type" value="Genomic_DNA"/>
</dbReference>
<dbReference type="PIR" id="S59316">
    <property type="entry name" value="S59316"/>
</dbReference>
<dbReference type="RefSeq" id="NP_013229.1">
    <property type="nucleotide sequence ID" value="NM_001182015.1"/>
</dbReference>
<dbReference type="PDB" id="2IS9">
    <property type="method" value="X-ray"/>
    <property type="resolution" value="1.92 A"/>
    <property type="chains" value="A=66-269"/>
</dbReference>
<dbReference type="PDB" id="2L4E">
    <property type="method" value="NMR"/>
    <property type="chains" value="A=6-62"/>
</dbReference>
<dbReference type="PDB" id="2L4F">
    <property type="method" value="NMR"/>
    <property type="chains" value="A=6-62"/>
</dbReference>
<dbReference type="PDB" id="3BQ3">
    <property type="method" value="X-ray"/>
    <property type="resolution" value="1.90 A"/>
    <property type="chains" value="A=1-269"/>
</dbReference>
<dbReference type="PDB" id="3O2P">
    <property type="method" value="X-ray"/>
    <property type="resolution" value="2.23 A"/>
    <property type="chains" value="A=70-269"/>
</dbReference>
<dbReference type="PDB" id="3O6B">
    <property type="method" value="X-ray"/>
    <property type="resolution" value="3.10 A"/>
    <property type="chains" value="A/C/E/G/I=70-269"/>
</dbReference>
<dbReference type="PDB" id="3TDI">
    <property type="method" value="X-ray"/>
    <property type="resolution" value="2.30 A"/>
    <property type="chains" value="A/B=70-269"/>
</dbReference>
<dbReference type="PDBsum" id="2IS9"/>
<dbReference type="PDBsum" id="2L4E"/>
<dbReference type="PDBsum" id="2L4F"/>
<dbReference type="PDBsum" id="3BQ3"/>
<dbReference type="PDBsum" id="3O2P"/>
<dbReference type="PDBsum" id="3O6B"/>
<dbReference type="PDBsum" id="3TDI"/>
<dbReference type="BMRB" id="Q12395"/>
<dbReference type="SMR" id="Q12395"/>
<dbReference type="BioGRID" id="31397">
    <property type="interactions" value="45"/>
</dbReference>
<dbReference type="DIP" id="DIP-1238N"/>
<dbReference type="FunCoup" id="Q12395">
    <property type="interactions" value="499"/>
</dbReference>
<dbReference type="IntAct" id="Q12395">
    <property type="interactions" value="1"/>
</dbReference>
<dbReference type="MINT" id="Q12395"/>
<dbReference type="STRING" id="4932.YLR128W"/>
<dbReference type="iPTMnet" id="Q12395"/>
<dbReference type="PaxDb" id="4932-YLR128W"/>
<dbReference type="PeptideAtlas" id="Q12395"/>
<dbReference type="EnsemblFungi" id="YLR128W_mRNA">
    <property type="protein sequence ID" value="YLR128W"/>
    <property type="gene ID" value="YLR128W"/>
</dbReference>
<dbReference type="GeneID" id="850819"/>
<dbReference type="KEGG" id="sce:YLR128W"/>
<dbReference type="AGR" id="SGD:S000004118"/>
<dbReference type="SGD" id="S000004118">
    <property type="gene designation" value="DCN1"/>
</dbReference>
<dbReference type="VEuPathDB" id="FungiDB:YLR128W"/>
<dbReference type="eggNOG" id="KOG3077">
    <property type="taxonomic scope" value="Eukaryota"/>
</dbReference>
<dbReference type="GeneTree" id="ENSGT00940000154944"/>
<dbReference type="HOGENOM" id="CLU_047042_0_0_1"/>
<dbReference type="InParanoid" id="Q12395"/>
<dbReference type="OMA" id="LWCKFLQ"/>
<dbReference type="OrthoDB" id="27198at2759"/>
<dbReference type="BioCyc" id="YEAST:G3O-32270-MONOMER"/>
<dbReference type="BRENDA" id="2.3.2.32">
    <property type="organism ID" value="984"/>
</dbReference>
<dbReference type="BioGRID-ORCS" id="850819">
    <property type="hits" value="2 hits in 10 CRISPR screens"/>
</dbReference>
<dbReference type="EvolutionaryTrace" id="Q12395"/>
<dbReference type="PRO" id="PR:Q12395"/>
<dbReference type="Proteomes" id="UP000002311">
    <property type="component" value="Chromosome XII"/>
</dbReference>
<dbReference type="RNAct" id="Q12395">
    <property type="molecule type" value="protein"/>
</dbReference>
<dbReference type="GO" id="GO:0000151">
    <property type="term" value="C:ubiquitin ligase complex"/>
    <property type="evidence" value="ECO:0000318"/>
    <property type="project" value="GO_Central"/>
</dbReference>
<dbReference type="GO" id="GO:0097602">
    <property type="term" value="F:cullin family protein binding"/>
    <property type="evidence" value="ECO:0000315"/>
    <property type="project" value="SGD"/>
</dbReference>
<dbReference type="GO" id="GO:0030674">
    <property type="term" value="F:protein-macromolecule adaptor activity"/>
    <property type="evidence" value="ECO:0000315"/>
    <property type="project" value="SGD"/>
</dbReference>
<dbReference type="GO" id="GO:0031624">
    <property type="term" value="F:ubiquitin conjugating enzyme binding"/>
    <property type="evidence" value="ECO:0000314"/>
    <property type="project" value="SGD"/>
</dbReference>
<dbReference type="GO" id="GO:0032182">
    <property type="term" value="F:ubiquitin-like protein binding"/>
    <property type="evidence" value="ECO:0000314"/>
    <property type="project" value="SGD"/>
</dbReference>
<dbReference type="GO" id="GO:0045116">
    <property type="term" value="P:protein neddylation"/>
    <property type="evidence" value="ECO:0000314"/>
    <property type="project" value="SGD"/>
</dbReference>
<dbReference type="CDD" id="cd14352">
    <property type="entry name" value="UBA_DCN1"/>
    <property type="match status" value="1"/>
</dbReference>
<dbReference type="FunFam" id="1.10.238.10:FF:000570">
    <property type="entry name" value="Defective in cullin neddylation protein 1"/>
    <property type="match status" value="1"/>
</dbReference>
<dbReference type="FunFam" id="1.10.238.200:FF:000010">
    <property type="entry name" value="Defective in cullin neddylation protein 1"/>
    <property type="match status" value="1"/>
</dbReference>
<dbReference type="Gene3D" id="1.10.238.200">
    <property type="entry name" value="Cullin, PONY binding domain"/>
    <property type="match status" value="1"/>
</dbReference>
<dbReference type="Gene3D" id="1.10.8.10">
    <property type="entry name" value="DNA helicase RuvA subunit, C-terminal domain"/>
    <property type="match status" value="1"/>
</dbReference>
<dbReference type="Gene3D" id="1.10.238.10">
    <property type="entry name" value="EF-hand"/>
    <property type="match status" value="1"/>
</dbReference>
<dbReference type="InterPro" id="IPR014764">
    <property type="entry name" value="DCN-prot"/>
</dbReference>
<dbReference type="InterPro" id="IPR042460">
    <property type="entry name" value="DCN1-like_PONY"/>
</dbReference>
<dbReference type="InterPro" id="IPR005176">
    <property type="entry name" value="PONY_dom"/>
</dbReference>
<dbReference type="InterPro" id="IPR009060">
    <property type="entry name" value="UBA-like_sf"/>
</dbReference>
<dbReference type="InterPro" id="IPR054109">
    <property type="entry name" value="UBA_8"/>
</dbReference>
<dbReference type="PANTHER" id="PTHR12281:SF31">
    <property type="entry name" value="DCN1-LIKE PROTEIN 3"/>
    <property type="match status" value="1"/>
</dbReference>
<dbReference type="PANTHER" id="PTHR12281">
    <property type="entry name" value="RP42 RELATED"/>
    <property type="match status" value="1"/>
</dbReference>
<dbReference type="Pfam" id="PF03556">
    <property type="entry name" value="Cullin_binding"/>
    <property type="match status" value="1"/>
</dbReference>
<dbReference type="Pfam" id="PF22566">
    <property type="entry name" value="UBA_8"/>
    <property type="match status" value="1"/>
</dbReference>
<dbReference type="SUPFAM" id="SSF46934">
    <property type="entry name" value="UBA-like"/>
    <property type="match status" value="1"/>
</dbReference>
<dbReference type="PROSITE" id="PS51229">
    <property type="entry name" value="DCUN1"/>
    <property type="match status" value="1"/>
</dbReference>
<proteinExistence type="evidence at protein level"/>
<organism>
    <name type="scientific">Saccharomyces cerevisiae (strain ATCC 204508 / S288c)</name>
    <name type="common">Baker's yeast</name>
    <dbReference type="NCBI Taxonomy" id="559292"/>
    <lineage>
        <taxon>Eukaryota</taxon>
        <taxon>Fungi</taxon>
        <taxon>Dikarya</taxon>
        <taxon>Ascomycota</taxon>
        <taxon>Saccharomycotina</taxon>
        <taxon>Saccharomycetes</taxon>
        <taxon>Saccharomycetales</taxon>
        <taxon>Saccharomycetaceae</taxon>
        <taxon>Saccharomyces</taxon>
    </lineage>
</organism>
<keyword id="KW-0002">3D-structure</keyword>
<keyword id="KW-0597">Phosphoprotein</keyword>
<keyword id="KW-1185">Reference proteome</keyword>
<keyword id="KW-0833">Ubl conjugation pathway</keyword>
<accession>Q12395</accession>
<accession>D6VYC3</accession>
<comment type="function">
    <text evidence="3">Required for neddylation of cullin components of SCF-type E3 ubiquitin ligase complexes. Neddylation of cullins play an essential role in the regulation of SCF-type complexes activity. Does not act by preventing deneddylation, but rather facilitates neddylation, possibly by acting with HRT1/RBX1 to recruit the Nedd8-charged E2 UBC12 to the cullin component of SCF-type complexes.</text>
</comment>
<comment type="subunit">
    <text evidence="2 3 4">Interacts with the cullin CDC53. Interacts with ubiquitin via its UBA-like domain. Interacts with RUB1/NEDD8.</text>
</comment>
<comment type="interaction">
    <interactant intactId="EBI-29871">
        <id>Q12395</id>
    </interactant>
    <interactant intactId="EBI-4321">
        <id>Q12018</id>
        <label>CDC53</label>
    </interactant>
    <organismsDiffer>false</organismsDiffer>
    <experiments>3</experiments>
</comment>